<dbReference type="EC" id="4.3.3.7" evidence="1"/>
<dbReference type="EMBL" id="CP000300">
    <property type="protein sequence ID" value="ABE51164.1"/>
    <property type="molecule type" value="Genomic_DNA"/>
</dbReference>
<dbReference type="RefSeq" id="WP_011498328.1">
    <property type="nucleotide sequence ID" value="NC_007955.1"/>
</dbReference>
<dbReference type="SMR" id="Q12ZG2"/>
<dbReference type="STRING" id="259564.Mbur_0147"/>
<dbReference type="GeneID" id="3998413"/>
<dbReference type="KEGG" id="mbu:Mbur_0147"/>
<dbReference type="HOGENOM" id="CLU_049343_7_0_2"/>
<dbReference type="OrthoDB" id="33636at2157"/>
<dbReference type="UniPathway" id="UPA00034">
    <property type="reaction ID" value="UER00017"/>
</dbReference>
<dbReference type="Proteomes" id="UP000001979">
    <property type="component" value="Chromosome"/>
</dbReference>
<dbReference type="GO" id="GO:0005737">
    <property type="term" value="C:cytoplasm"/>
    <property type="evidence" value="ECO:0007669"/>
    <property type="project" value="UniProtKB-SubCell"/>
</dbReference>
<dbReference type="GO" id="GO:0008675">
    <property type="term" value="F:2-dehydro-3-deoxy-phosphogluconate aldolase activity"/>
    <property type="evidence" value="ECO:0007669"/>
    <property type="project" value="UniProtKB-ARBA"/>
</dbReference>
<dbReference type="GO" id="GO:0008840">
    <property type="term" value="F:4-hydroxy-tetrahydrodipicolinate synthase activity"/>
    <property type="evidence" value="ECO:0007669"/>
    <property type="project" value="UniProtKB-UniRule"/>
</dbReference>
<dbReference type="GO" id="GO:0019877">
    <property type="term" value="P:diaminopimelate biosynthetic process"/>
    <property type="evidence" value="ECO:0007669"/>
    <property type="project" value="UniProtKB-UniRule"/>
</dbReference>
<dbReference type="GO" id="GO:0009089">
    <property type="term" value="P:lysine biosynthetic process via diaminopimelate"/>
    <property type="evidence" value="ECO:0007669"/>
    <property type="project" value="UniProtKB-UniRule"/>
</dbReference>
<dbReference type="CDD" id="cd00950">
    <property type="entry name" value="DHDPS"/>
    <property type="match status" value="1"/>
</dbReference>
<dbReference type="Gene3D" id="3.20.20.70">
    <property type="entry name" value="Aldolase class I"/>
    <property type="match status" value="1"/>
</dbReference>
<dbReference type="HAMAP" id="MF_00418">
    <property type="entry name" value="DapA"/>
    <property type="match status" value="1"/>
</dbReference>
<dbReference type="InterPro" id="IPR013785">
    <property type="entry name" value="Aldolase_TIM"/>
</dbReference>
<dbReference type="InterPro" id="IPR005263">
    <property type="entry name" value="DapA"/>
</dbReference>
<dbReference type="InterPro" id="IPR002220">
    <property type="entry name" value="DapA-like"/>
</dbReference>
<dbReference type="InterPro" id="IPR020625">
    <property type="entry name" value="Schiff_base-form_aldolases_AS"/>
</dbReference>
<dbReference type="InterPro" id="IPR020624">
    <property type="entry name" value="Schiff_base-form_aldolases_CS"/>
</dbReference>
<dbReference type="NCBIfam" id="TIGR00674">
    <property type="entry name" value="dapA"/>
    <property type="match status" value="1"/>
</dbReference>
<dbReference type="PANTHER" id="PTHR12128:SF66">
    <property type="entry name" value="4-HYDROXY-2-OXOGLUTARATE ALDOLASE, MITOCHONDRIAL"/>
    <property type="match status" value="1"/>
</dbReference>
<dbReference type="PANTHER" id="PTHR12128">
    <property type="entry name" value="DIHYDRODIPICOLINATE SYNTHASE"/>
    <property type="match status" value="1"/>
</dbReference>
<dbReference type="Pfam" id="PF00701">
    <property type="entry name" value="DHDPS"/>
    <property type="match status" value="1"/>
</dbReference>
<dbReference type="PIRSF" id="PIRSF001365">
    <property type="entry name" value="DHDPS"/>
    <property type="match status" value="1"/>
</dbReference>
<dbReference type="PRINTS" id="PR00146">
    <property type="entry name" value="DHPICSNTHASE"/>
</dbReference>
<dbReference type="SMART" id="SM01130">
    <property type="entry name" value="DHDPS"/>
    <property type="match status" value="1"/>
</dbReference>
<dbReference type="SUPFAM" id="SSF51569">
    <property type="entry name" value="Aldolase"/>
    <property type="match status" value="1"/>
</dbReference>
<dbReference type="PROSITE" id="PS00665">
    <property type="entry name" value="DHDPS_1"/>
    <property type="match status" value="1"/>
</dbReference>
<dbReference type="PROSITE" id="PS00666">
    <property type="entry name" value="DHDPS_2"/>
    <property type="match status" value="1"/>
</dbReference>
<gene>
    <name evidence="1" type="primary">dapA</name>
    <name type="ordered locus">Mbur_0147</name>
</gene>
<evidence type="ECO:0000255" key="1">
    <source>
        <dbReference type="HAMAP-Rule" id="MF_00418"/>
    </source>
</evidence>
<evidence type="ECO:0000305" key="2"/>
<feature type="chain" id="PRO_1000050214" description="4-hydroxy-tetrahydrodipicolinate synthase">
    <location>
        <begin position="1"/>
        <end position="291"/>
    </location>
</feature>
<feature type="active site" description="Proton donor/acceptor" evidence="1">
    <location>
        <position position="131"/>
    </location>
</feature>
<feature type="active site" description="Schiff-base intermediate with substrate" evidence="1">
    <location>
        <position position="159"/>
    </location>
</feature>
<feature type="binding site" evidence="1">
    <location>
        <position position="45"/>
    </location>
    <ligand>
        <name>pyruvate</name>
        <dbReference type="ChEBI" id="CHEBI:15361"/>
    </ligand>
</feature>
<feature type="binding site" evidence="1">
    <location>
        <position position="202"/>
    </location>
    <ligand>
        <name>pyruvate</name>
        <dbReference type="ChEBI" id="CHEBI:15361"/>
    </ligand>
</feature>
<feature type="site" description="Part of a proton relay during catalysis" evidence="1">
    <location>
        <position position="44"/>
    </location>
</feature>
<feature type="site" description="Part of a proton relay during catalysis" evidence="1">
    <location>
        <position position="105"/>
    </location>
</feature>
<sequence>MFEGVLPALITPFTKDDTIDRTGLIKNIEFAENGKVTGVVVCGTTGESATLSTAEHMEVIDIAVECANVPVVAGTGSNNTAEAVELTKHAEEAGASGALVISPYYNKPNKAGLISHFRTIAEAVEIPIVLYNVPSRTGQDISLEVITELAKIDNIVGIKEASGNLDKASQIIENTMDEDFKVTSGDDGLTLPIMSIGGCGVISVVANIVPDRMSRLVNAFNEGDTATAQQLHYEIAPLIRALFTETNPVPIKRAMNLVGLNAGHLRPPLAPISAENNKLLANCLKELGCLQ</sequence>
<proteinExistence type="inferred from homology"/>
<reference key="1">
    <citation type="journal article" date="2009" name="ISME J.">
        <title>The genome sequence of the psychrophilic archaeon, Methanococcoides burtonii: the role of genome evolution in cold adaptation.</title>
        <authorList>
            <person name="Allen M.A."/>
            <person name="Lauro F.M."/>
            <person name="Williams T.J."/>
            <person name="Burg D."/>
            <person name="Siddiqui K.S."/>
            <person name="De Francisci D."/>
            <person name="Chong K.W."/>
            <person name="Pilak O."/>
            <person name="Chew H.H."/>
            <person name="De Maere M.Z."/>
            <person name="Ting L."/>
            <person name="Katrib M."/>
            <person name="Ng C."/>
            <person name="Sowers K.R."/>
            <person name="Galperin M.Y."/>
            <person name="Anderson I.J."/>
            <person name="Ivanova N."/>
            <person name="Dalin E."/>
            <person name="Martinez M."/>
            <person name="Lapidus A."/>
            <person name="Hauser L."/>
            <person name="Land M."/>
            <person name="Thomas T."/>
            <person name="Cavicchioli R."/>
        </authorList>
    </citation>
    <scope>NUCLEOTIDE SEQUENCE [LARGE SCALE GENOMIC DNA]</scope>
    <source>
        <strain>DSM 6242 / NBRC 107633 / OCM 468 / ACE-M</strain>
    </source>
</reference>
<accession>Q12ZG2</accession>
<name>DAPA_METBU</name>
<protein>
    <recommendedName>
        <fullName evidence="1">4-hydroxy-tetrahydrodipicolinate synthase</fullName>
        <shortName evidence="1">HTPA synthase</shortName>
        <ecNumber evidence="1">4.3.3.7</ecNumber>
    </recommendedName>
</protein>
<organism>
    <name type="scientific">Methanococcoides burtonii (strain DSM 6242 / NBRC 107633 / OCM 468 / ACE-M)</name>
    <dbReference type="NCBI Taxonomy" id="259564"/>
    <lineage>
        <taxon>Archaea</taxon>
        <taxon>Methanobacteriati</taxon>
        <taxon>Methanobacteriota</taxon>
        <taxon>Stenosarchaea group</taxon>
        <taxon>Methanomicrobia</taxon>
        <taxon>Methanosarcinales</taxon>
        <taxon>Methanosarcinaceae</taxon>
        <taxon>Methanococcoides</taxon>
    </lineage>
</organism>
<keyword id="KW-0028">Amino-acid biosynthesis</keyword>
<keyword id="KW-0963">Cytoplasm</keyword>
<keyword id="KW-0220">Diaminopimelate biosynthesis</keyword>
<keyword id="KW-0456">Lyase</keyword>
<keyword id="KW-0457">Lysine biosynthesis</keyword>
<keyword id="KW-0704">Schiff base</keyword>
<comment type="function">
    <text evidence="1">Catalyzes the condensation of (S)-aspartate-beta-semialdehyde [(S)-ASA] and pyruvate to 4-hydroxy-tetrahydrodipicolinate (HTPA).</text>
</comment>
<comment type="catalytic activity">
    <reaction evidence="1">
        <text>L-aspartate 4-semialdehyde + pyruvate = (2S,4S)-4-hydroxy-2,3,4,5-tetrahydrodipicolinate + H2O + H(+)</text>
        <dbReference type="Rhea" id="RHEA:34171"/>
        <dbReference type="ChEBI" id="CHEBI:15361"/>
        <dbReference type="ChEBI" id="CHEBI:15377"/>
        <dbReference type="ChEBI" id="CHEBI:15378"/>
        <dbReference type="ChEBI" id="CHEBI:67139"/>
        <dbReference type="ChEBI" id="CHEBI:537519"/>
        <dbReference type="EC" id="4.3.3.7"/>
    </reaction>
</comment>
<comment type="pathway">
    <text evidence="1">Amino-acid biosynthesis; L-lysine biosynthesis via DAP pathway; (S)-tetrahydrodipicolinate from L-aspartate: step 3/4.</text>
</comment>
<comment type="subunit">
    <text evidence="1">Homotetramer; dimer of dimers.</text>
</comment>
<comment type="subcellular location">
    <subcellularLocation>
        <location evidence="1">Cytoplasm</location>
    </subcellularLocation>
</comment>
<comment type="similarity">
    <text evidence="1">Belongs to the DapA family.</text>
</comment>
<comment type="caution">
    <text evidence="2">Was originally thought to be a dihydrodipicolinate synthase (DHDPS), catalyzing the condensation of (S)-aspartate-beta-semialdehyde [(S)-ASA] and pyruvate to dihydrodipicolinate (DHDP). However, it was shown in E.coli that the product of the enzymatic reaction is not dihydrodipicolinate but in fact (4S)-4-hydroxy-2,3,4,5-tetrahydro-(2S)-dipicolinic acid (HTPA), and that the consecutive dehydration reaction leading to DHDP is not spontaneous but catalyzed by DapB.</text>
</comment>